<feature type="chain" id="PRO_0000433496" description="Collagen alpha-1(I) chain" evidence="6">
    <location>
        <begin position="1"/>
        <end position="1022"/>
    </location>
</feature>
<feature type="region of interest" description="Disordered" evidence="5">
    <location>
        <begin position="1"/>
        <end position="1022"/>
    </location>
</feature>
<feature type="compositionally biased region" description="Low complexity" evidence="5">
    <location>
        <begin position="28"/>
        <end position="47"/>
    </location>
</feature>
<feature type="compositionally biased region" description="Basic and acidic residues" evidence="5">
    <location>
        <begin position="59"/>
        <end position="73"/>
    </location>
</feature>
<feature type="compositionally biased region" description="Low complexity" evidence="5">
    <location>
        <begin position="109"/>
        <end position="125"/>
    </location>
</feature>
<feature type="compositionally biased region" description="Low complexity" evidence="5">
    <location>
        <begin position="143"/>
        <end position="161"/>
    </location>
</feature>
<feature type="compositionally biased region" description="Pro residues" evidence="5">
    <location>
        <begin position="163"/>
        <end position="175"/>
    </location>
</feature>
<feature type="compositionally biased region" description="Low complexity" evidence="5">
    <location>
        <begin position="209"/>
        <end position="259"/>
    </location>
</feature>
<feature type="compositionally biased region" description="Gly residues" evidence="5">
    <location>
        <begin position="315"/>
        <end position="324"/>
    </location>
</feature>
<feature type="compositionally biased region" description="Low complexity" evidence="5">
    <location>
        <begin position="368"/>
        <end position="394"/>
    </location>
</feature>
<feature type="compositionally biased region" description="Low complexity" evidence="5">
    <location>
        <begin position="403"/>
        <end position="422"/>
    </location>
</feature>
<feature type="compositionally biased region" description="Low complexity" evidence="5">
    <location>
        <begin position="464"/>
        <end position="491"/>
    </location>
</feature>
<feature type="compositionally biased region" description="Low complexity" evidence="5">
    <location>
        <begin position="530"/>
        <end position="557"/>
    </location>
</feature>
<feature type="compositionally biased region" description="Low complexity" evidence="5">
    <location>
        <begin position="614"/>
        <end position="628"/>
    </location>
</feature>
<feature type="compositionally biased region" description="Low complexity" evidence="5">
    <location>
        <begin position="641"/>
        <end position="668"/>
    </location>
</feature>
<feature type="compositionally biased region" description="Pro residues" evidence="5">
    <location>
        <begin position="670"/>
        <end position="682"/>
    </location>
</feature>
<feature type="compositionally biased region" description="Low complexity" evidence="5">
    <location>
        <begin position="697"/>
        <end position="713"/>
    </location>
</feature>
<feature type="compositionally biased region" description="Low complexity" evidence="5">
    <location>
        <begin position="742"/>
        <end position="751"/>
    </location>
</feature>
<feature type="compositionally biased region" description="Low complexity" evidence="5">
    <location>
        <begin position="761"/>
        <end position="776"/>
    </location>
</feature>
<feature type="compositionally biased region" description="Pro residues" evidence="5">
    <location>
        <begin position="826"/>
        <end position="836"/>
    </location>
</feature>
<feature type="compositionally biased region" description="Low complexity" evidence="5">
    <location>
        <begin position="838"/>
        <end position="853"/>
    </location>
</feature>
<feature type="compositionally biased region" description="Pro residues" evidence="5">
    <location>
        <begin position="872"/>
        <end position="887"/>
    </location>
</feature>
<feature type="compositionally biased region" description="Low complexity" evidence="5">
    <location>
        <begin position="908"/>
        <end position="922"/>
    </location>
</feature>
<feature type="compositionally biased region" description="Basic and acidic residues" evidence="5">
    <location>
        <begin position="923"/>
        <end position="937"/>
    </location>
</feature>
<feature type="compositionally biased region" description="Low complexity" evidence="5">
    <location>
        <begin position="956"/>
        <end position="989"/>
    </location>
</feature>
<feature type="compositionally biased region" description="Pro residues" evidence="5">
    <location>
        <begin position="1007"/>
        <end position="1022"/>
    </location>
</feature>
<feature type="modified residue" description="4-hydroxyproline" evidence="2">
    <location>
        <position position="20"/>
    </location>
</feature>
<feature type="modified residue" description="4-hydroxyproline" evidence="2">
    <location>
        <position position="23"/>
    </location>
</feature>
<feature type="modified residue" description="4-hydroxyproline" evidence="2">
    <location>
        <position position="26"/>
    </location>
</feature>
<feature type="modified residue" description="4-hydroxyproline" evidence="2">
    <location>
        <position position="35"/>
    </location>
</feature>
<feature type="modified residue" description="4-hydroxyproline" evidence="2">
    <location>
        <position position="38"/>
    </location>
</feature>
<feature type="modified residue" description="4-hydroxyproline" evidence="2">
    <location>
        <position position="41"/>
    </location>
</feature>
<feature type="modified residue" description="4-hydroxyproline" evidence="3">
    <location>
        <position position="56"/>
    </location>
</feature>
<feature type="modified residue" description="4-hydroxyproline" evidence="3">
    <location>
        <position position="71"/>
    </location>
</feature>
<feature type="modified residue" description="4-hydroxyproline" evidence="3">
    <location>
        <position position="77"/>
    </location>
</feature>
<feature type="modified residue" description="4-hydroxyproline" evidence="3">
    <location>
        <position position="86"/>
    </location>
</feature>
<feature type="modified residue" description="4-hydroxyproline" evidence="3">
    <location>
        <position position="92"/>
    </location>
</feature>
<feature type="modified residue" description="5-hydroxylysine; alternate" evidence="2">
    <location>
        <position position="95"/>
    </location>
</feature>
<feature type="modified residue" description="Phosphoserine" evidence="2">
    <location>
        <position position="101"/>
    </location>
</feature>
<feature type="modified residue" description="4-hydroxyproline" evidence="3">
    <location>
        <position position="119"/>
    </location>
</feature>
<feature type="modified residue" description="4-hydroxyproline" evidence="3">
    <location>
        <position position="122"/>
    </location>
</feature>
<feature type="modified residue" description="4-hydroxyproline" evidence="3">
    <location>
        <position position="128"/>
    </location>
</feature>
<feature type="modified residue" description="4-hydroxyproline" evidence="3">
    <location>
        <position position="137"/>
    </location>
</feature>
<feature type="modified residue" description="4-hydroxyproline" evidence="3">
    <location>
        <position position="143"/>
    </location>
</feature>
<feature type="modified residue" description="4-hydroxyproline" evidence="3">
    <location>
        <position position="164"/>
    </location>
</feature>
<feature type="modified residue" description="4-hydroxyproline" evidence="3">
    <location>
        <position position="173"/>
    </location>
</feature>
<feature type="modified residue" description="4-hydroxyproline" evidence="3">
    <location>
        <position position="176"/>
    </location>
</feature>
<feature type="modified residue" description="4-hydroxyproline" evidence="3">
    <location>
        <position position="203"/>
    </location>
</feature>
<feature type="modified residue" description="4-hydroxyproline" evidence="3">
    <location>
        <position position="206"/>
    </location>
</feature>
<feature type="modified residue" description="4-hydroxyproline" evidence="3">
    <location>
        <position position="218"/>
    </location>
</feature>
<feature type="modified residue" description="4-hydroxyproline" evidence="3">
    <location>
        <position position="224"/>
    </location>
</feature>
<feature type="modified residue" description="4-hydroxyproline" evidence="3">
    <location>
        <position position="233"/>
    </location>
</feature>
<feature type="modified residue" description="4-hydroxyproline" evidence="3">
    <location>
        <position position="239"/>
    </location>
</feature>
<feature type="modified residue" description="4-hydroxyproline" evidence="3">
    <location>
        <position position="242"/>
    </location>
</feature>
<feature type="modified residue" description="4-hydroxyproline" evidence="3">
    <location>
        <position position="257"/>
    </location>
</feature>
<feature type="modified residue" description="5-hydroxylysine" evidence="3">
    <location>
        <position position="260"/>
    </location>
</feature>
<feature type="modified residue" description="4-hydroxyproline" evidence="3">
    <location>
        <position position="266"/>
    </location>
</feature>
<feature type="modified residue" description="4-hydroxyproline" evidence="3">
    <location>
        <position position="269"/>
    </location>
</feature>
<feature type="modified residue" description="4-hydroxyproline" evidence="3">
    <location>
        <position position="281"/>
    </location>
</feature>
<feature type="modified residue" description="4-hydroxyproline" evidence="3">
    <location>
        <position position="290"/>
    </location>
</feature>
<feature type="modified residue" description="4-hydroxyproline" evidence="3">
    <location>
        <position position="305"/>
    </location>
</feature>
<feature type="modified residue" description="4-hydroxyproline" evidence="3">
    <location>
        <position position="311"/>
    </location>
</feature>
<feature type="modified residue" description="4-hydroxyproline" evidence="3">
    <location>
        <position position="320"/>
    </location>
</feature>
<feature type="modified residue" description="4-hydroxyproline" evidence="3">
    <location>
        <position position="326"/>
    </location>
</feature>
<feature type="modified residue" description="5-hydroxylysine" evidence="3">
    <location>
        <position position="335"/>
    </location>
</feature>
<feature type="modified residue" description="4-hydroxyproline" evidence="3">
    <location>
        <position position="344"/>
    </location>
</feature>
<feature type="modified residue" description="4-hydroxyproline" evidence="3">
    <location>
        <position position="353"/>
    </location>
</feature>
<feature type="modified residue" description="4-hydroxyproline" evidence="3">
    <location>
        <position position="359"/>
    </location>
</feature>
<feature type="modified residue" description="4-hydroxyproline" evidence="3">
    <location>
        <position position="365"/>
    </location>
</feature>
<feature type="modified residue" description="4-hydroxyproline" evidence="3">
    <location>
        <position position="374"/>
    </location>
</feature>
<feature type="modified residue" description="4-hydroxyproline" evidence="3">
    <location>
        <position position="377"/>
    </location>
</feature>
<feature type="modified residue" description="4-hydroxyproline" evidence="3">
    <location>
        <position position="386"/>
    </location>
</feature>
<feature type="modified residue" description="4-hydroxyproline" evidence="3">
    <location>
        <position position="395"/>
    </location>
</feature>
<feature type="modified residue" description="4-hydroxyproline" evidence="3">
    <location>
        <position position="401"/>
    </location>
</feature>
<feature type="modified residue" description="4-hydroxyproline" evidence="3">
    <location>
        <position position="413"/>
    </location>
</feature>
<feature type="modified residue" description="4-hydroxyproline" evidence="3">
    <location>
        <position position="422"/>
    </location>
</feature>
<feature type="modified residue" description="4-hydroxyproline" evidence="3">
    <location>
        <position position="431"/>
    </location>
</feature>
<feature type="modified residue" description="4-hydroxyproline" evidence="3">
    <location>
        <position position="434"/>
    </location>
</feature>
<feature type="modified residue" description="4-hydroxyproline" evidence="3">
    <location>
        <position position="452"/>
    </location>
</feature>
<feature type="modified residue" description="4-hydroxyproline" evidence="3">
    <location>
        <position position="470"/>
    </location>
</feature>
<feature type="modified residue" description="4-hydroxyproline" evidence="3">
    <location>
        <position position="476"/>
    </location>
</feature>
<feature type="modified residue" description="4-hydroxyproline" evidence="3">
    <location>
        <position position="482"/>
    </location>
</feature>
<feature type="modified residue" description="4-hydroxyproline" evidence="3">
    <location>
        <position position="488"/>
    </location>
</feature>
<feature type="modified residue" description="4-hydroxyproline" evidence="3">
    <location>
        <position position="494"/>
    </location>
</feature>
<feature type="modified residue" description="4-hydroxyproline" evidence="3">
    <location>
        <position position="500"/>
    </location>
</feature>
<feature type="modified residue" description="4-hydroxyproline" evidence="3">
    <location>
        <position position="512"/>
    </location>
</feature>
<feature type="modified residue" description="4-hydroxyproline" evidence="3">
    <location>
        <position position="521"/>
    </location>
</feature>
<feature type="modified residue" description="4-hydroxyproline" evidence="3">
    <location>
        <position position="533"/>
    </location>
</feature>
<feature type="modified residue" description="4-hydroxyproline" evidence="3">
    <location>
        <position position="545"/>
    </location>
</feature>
<feature type="modified residue" description="4-hydroxyproline" evidence="3">
    <location>
        <position position="548"/>
    </location>
</feature>
<feature type="modified residue" description="4-hydroxyproline" evidence="3">
    <location>
        <position position="554"/>
    </location>
</feature>
<feature type="modified residue" description="4-hydroxyproline" evidence="3">
    <location>
        <position position="560"/>
    </location>
</feature>
<feature type="modified residue" description="4-hydroxyproline" evidence="3">
    <location>
        <position position="569"/>
    </location>
</feature>
<feature type="modified residue" description="5-hydroxylysine" evidence="3">
    <location>
        <position position="581"/>
    </location>
</feature>
<feature type="modified residue" description="4-hydroxyproline" evidence="3">
    <location>
        <position position="587"/>
    </location>
</feature>
<feature type="modified residue" description="4-hydroxyproline" evidence="3">
    <location>
        <position position="602"/>
    </location>
</feature>
<feature type="modified residue" description="4-hydroxyproline" evidence="3">
    <location>
        <position position="608"/>
    </location>
</feature>
<feature type="modified residue" description="Phosphoserine" evidence="2">
    <location>
        <position position="617"/>
    </location>
</feature>
<feature type="modified residue" description="4-hydroxyproline" evidence="3">
    <location>
        <position position="629"/>
    </location>
</feature>
<feature type="modified residue" description="4-hydroxyproline" evidence="3">
    <location>
        <position position="635"/>
    </location>
</feature>
<feature type="modified residue" description="4-hydroxyproline" evidence="3">
    <location>
        <position position="638"/>
    </location>
</feature>
<feature type="modified residue" description="4-hydroxyproline" evidence="3">
    <location>
        <position position="647"/>
    </location>
</feature>
<feature type="modified residue" description="4-hydroxyproline" evidence="3">
    <location>
        <position position="653"/>
    </location>
</feature>
<feature type="modified residue" description="4-hydroxyproline" evidence="3">
    <location>
        <position position="671"/>
    </location>
</feature>
<feature type="modified residue" description="4-hydroxyproline" evidence="3">
    <location>
        <position position="680"/>
    </location>
</feature>
<feature type="modified residue" description="4-hydroxyproline" evidence="3">
    <location>
        <position position="689"/>
    </location>
</feature>
<feature type="modified residue" description="5-hydroxylysine" evidence="3">
    <location>
        <position position="692"/>
    </location>
</feature>
<feature type="modified residue" description="4-hydroxyproline" evidence="3">
    <location>
        <position position="701"/>
    </location>
</feature>
<feature type="modified residue" description="4-hydroxyproline" evidence="3">
    <location>
        <position position="707"/>
    </location>
</feature>
<feature type="modified residue" description="3-hydroxyproline" evidence="4">
    <location>
        <position position="715"/>
    </location>
</feature>
<feature type="modified residue" description="4-hydroxyproline" evidence="4">
    <location>
        <position position="716"/>
    </location>
</feature>
<feature type="modified residue" description="4-hydroxyproline" evidence="4">
    <location>
        <position position="725"/>
    </location>
</feature>
<feature type="modified residue" description="4-hydroxyproline" evidence="4">
    <location>
        <position position="728"/>
    </location>
</feature>
<feature type="modified residue" description="4-hydroxyproline" evidence="3">
    <location>
        <position position="749"/>
    </location>
</feature>
<feature type="modified residue" description="4-hydroxyproline" evidence="3">
    <location>
        <position position="758"/>
    </location>
</feature>
<feature type="modified residue" description="4-hydroxyproline" evidence="3">
    <location>
        <position position="767"/>
    </location>
</feature>
<feature type="modified residue" description="4-hydroxyproline" evidence="3">
    <location>
        <position position="776"/>
    </location>
</feature>
<feature type="modified residue" description="4-hydroxyproline" evidence="3">
    <location>
        <position position="794"/>
    </location>
</feature>
<feature type="modified residue" description="4-hydroxyproline" evidence="3">
    <location>
        <position position="803"/>
    </location>
</feature>
<feature type="modified residue" description="4-hydroxyproline" evidence="3">
    <location>
        <position position="806"/>
    </location>
</feature>
<feature type="modified residue" description="4-hydroxyproline" evidence="3">
    <location>
        <position position="812"/>
    </location>
</feature>
<feature type="modified residue" description="4-hydroxyproline" evidence="3">
    <location>
        <position position="827"/>
    </location>
</feature>
<feature type="modified residue" description="4-hydroxyproline" evidence="3">
    <location>
        <position position="833"/>
    </location>
</feature>
<feature type="modified residue" description="4-hydroxyproline" evidence="3">
    <location>
        <position position="839"/>
    </location>
</feature>
<feature type="modified residue" description="4-hydroxyproline" evidence="3">
    <location>
        <position position="848"/>
    </location>
</feature>
<feature type="modified residue" description="4-hydroxyproline" evidence="3">
    <location>
        <position position="854"/>
    </location>
</feature>
<feature type="modified residue" description="5-hydroxylysine" evidence="3">
    <location>
        <position position="863"/>
    </location>
</feature>
<feature type="modified residue" description="4-hydroxyproline" evidence="3">
    <location>
        <position position="875"/>
    </location>
</feature>
<feature type="modified residue" description="4-hydroxyproline" evidence="3">
    <location>
        <position position="878"/>
    </location>
</feature>
<feature type="modified residue" description="4-hydroxyproline" evidence="3">
    <location>
        <position position="881"/>
    </location>
</feature>
<feature type="modified residue" description="5-hydroxylysine" evidence="3">
    <location>
        <position position="926"/>
    </location>
</feature>
<feature type="modified residue" description="5-hydroxylysine; alternate" evidence="4">
    <location>
        <position position="938"/>
    </location>
</feature>
<feature type="modified residue" description="4-hydroxyproline" evidence="3">
    <location>
        <position position="953"/>
    </location>
</feature>
<feature type="modified residue" description="4-hydroxyproline" evidence="3">
    <location>
        <position position="956"/>
    </location>
</feature>
<feature type="modified residue" description="4-hydroxyproline" evidence="3">
    <location>
        <position position="974"/>
    </location>
</feature>
<feature type="modified residue" description="4-hydroxyproline" evidence="4">
    <location>
        <position position="989"/>
    </location>
</feature>
<feature type="modified residue" description="3-hydroxyproline" evidence="4">
    <location>
        <position position="994"/>
    </location>
</feature>
<feature type="modified residue" description="4-hydroxyproline" evidence="4">
    <location>
        <position position="995"/>
    </location>
</feature>
<feature type="modified residue" description="3-hydroxyproline" evidence="4">
    <location>
        <position position="1009"/>
    </location>
</feature>
<feature type="modified residue" description="4-hydroxyproline" evidence="4">
    <location>
        <position position="1010"/>
    </location>
</feature>
<feature type="modified residue" description="3-hydroxyproline" evidence="4">
    <location>
        <position position="1012"/>
    </location>
</feature>
<feature type="modified residue" description="4-hydroxyproline" evidence="4">
    <location>
        <position position="1013"/>
    </location>
</feature>
<feature type="modified residue" description="3-hydroxyproline" evidence="4">
    <location>
        <position position="1015"/>
    </location>
</feature>
<feature type="modified residue" description="4-hydroxyproline" evidence="4">
    <location>
        <position position="1016"/>
    </location>
</feature>
<feature type="modified residue" description="4-hydroxyproline" evidence="4">
    <location>
        <position position="1019"/>
    </location>
</feature>
<feature type="modified residue" description="4-hydroxyproline" evidence="4">
    <location>
        <position position="1022"/>
    </location>
</feature>
<feature type="glycosylation site" description="O-linked (Gal...) hydroxylysine; alternate" evidence="1">
    <location>
        <position position="95"/>
    </location>
</feature>
<feature type="glycosylation site" description="O-linked (Gal...) hydroxylysine; alternate" evidence="3">
    <location>
        <position position="938"/>
    </location>
</feature>
<feature type="unsure residue" description="I or L" evidence="7">
    <location>
        <position position="5"/>
    </location>
</feature>
<feature type="unsure residue" description="L or I" evidence="7">
    <location>
        <position position="19"/>
    </location>
</feature>
<feature type="unsure residue" description="L or I" evidence="6 7">
    <location>
        <position position="85"/>
    </location>
</feature>
<feature type="unsure residue" description="L or I" evidence="6 7">
    <location>
        <position position="91"/>
    </location>
</feature>
<feature type="unsure residue" description="L or I" evidence="6 7">
    <location>
        <position position="103"/>
    </location>
</feature>
<feature type="unsure residue" description="L or I" evidence="7">
    <location>
        <position position="136"/>
    </location>
</feature>
<feature type="unsure residue" description="I or L" evidence="6 7">
    <location>
        <position position="235"/>
    </location>
</feature>
<feature type="unsure residue" description="I or L" evidence="7">
    <location>
        <position position="286"/>
    </location>
</feature>
<feature type="unsure residue" description="L or I" evidence="6 7">
    <location>
        <position position="310"/>
    </location>
</feature>
<feature type="unsure residue" description="L or I" evidence="7">
    <location>
        <position position="364"/>
    </location>
</feature>
<feature type="unsure residue" description="L or I" evidence="6 7">
    <location>
        <position position="370"/>
    </location>
</feature>
<feature type="unsure residue" description="L or I" evidence="6 7">
    <location>
        <position position="475"/>
    </location>
</feature>
<feature type="unsure residue" description="L or I" evidence="6 7">
    <location>
        <position position="497"/>
    </location>
</feature>
<feature type="unsure residue" description="L or I" evidence="7">
    <location>
        <position position="556"/>
    </location>
</feature>
<feature type="unsure residue" description="L or I" evidence="7">
    <location>
        <position position="568"/>
    </location>
</feature>
<feature type="unsure residue" description="L or I" evidence="6 7">
    <location>
        <position position="595"/>
    </location>
</feature>
<feature type="unsure residue" description="I or L" evidence="6 7">
    <location>
        <position position="599"/>
    </location>
</feature>
<feature type="unsure residue" description="I or L" evidence="6 7">
    <location>
        <position position="683"/>
    </location>
</feature>
<feature type="unsure residue" description="I or L" evidence="6 7">
    <location>
        <position position="784"/>
    </location>
</feature>
<feature type="unsure residue" description="L or I" evidence="6 7">
    <location>
        <position position="793"/>
    </location>
</feature>
<feature type="unsure residue" description="L or I" evidence="6 7">
    <location>
        <position position="805"/>
    </location>
</feature>
<feature type="unsure residue" description="L or I" evidence="6 7">
    <location>
        <position position="835"/>
    </location>
</feature>
<feature type="unsure residue" description="I or L" evidence="7">
    <location>
        <position position="937"/>
    </location>
</feature>
<feature type="unsure residue" description="L or I" evidence="6 7">
    <location>
        <position position="946"/>
    </location>
</feature>
<feature type="unsure residue" description="L or I" evidence="6 7">
    <location>
        <position position="985"/>
    </location>
</feature>
<feature type="unsure residue" description="L or I" evidence="6 7">
    <location>
        <position position="988"/>
    </location>
</feature>
<feature type="unsure residue" description="I or L" evidence="7">
    <location>
        <position position="992"/>
    </location>
</feature>
<feature type="sequence conflict" description="In Ref. 2; AA sequence." evidence="10" ref="2">
    <original>R</original>
    <variation>A</variation>
    <location>
        <position position="50"/>
    </location>
</feature>
<feature type="sequence conflict" description="In Ref. 2; AA sequence." evidence="10" ref="2">
    <original>A</original>
    <variation>S</variation>
    <location>
        <position position="244"/>
    </location>
</feature>
<feature type="sequence conflict" description="In Ref. 2; AA sequence." evidence="10" ref="2">
    <original>P</original>
    <variation>A</variation>
    <location>
        <position position="398"/>
    </location>
</feature>
<feature type="sequence conflict" description="In Ref. 2; AA sequence." evidence="10" ref="2">
    <original>E</original>
    <variation>A</variation>
    <location>
        <position position="427"/>
    </location>
</feature>
<feature type="sequence conflict" description="In Ref. 2; AA sequence." evidence="10" ref="2">
    <original>S</original>
    <variation>A</variation>
    <location>
        <position position="503"/>
    </location>
</feature>
<feature type="sequence conflict" description="In Ref. 2; AA sequence." evidence="10" ref="2">
    <original>A</original>
    <variation>S</variation>
    <location>
        <position position="505"/>
    </location>
</feature>
<feature type="sequence conflict" description="In Ref. 2; AA sequence." evidence="10" ref="2">
    <original>A</original>
    <variation>P</variation>
    <location>
        <position position="950"/>
    </location>
</feature>
<feature type="sequence conflict" description="In Ref. 2; AA sequence." evidence="10" ref="2">
    <original>P</original>
    <variation>A</variation>
    <location>
        <position position="952"/>
    </location>
</feature>
<feature type="non-terminal residue" evidence="9">
    <location>
        <position position="1"/>
    </location>
</feature>
<feature type="non-terminal residue" evidence="9">
    <location>
        <position position="1022"/>
    </location>
</feature>
<comment type="function">
    <text evidence="10">Type I collagen is a member of group I collagen (fibrillar forming collagen).</text>
</comment>
<comment type="subunit">
    <text evidence="10">Trimers of one alpha 2(I) and two alpha 1(I) chains.</text>
</comment>
<comment type="subcellular location">
    <subcellularLocation>
        <location evidence="1">Secreted</location>
    </subcellularLocation>
    <subcellularLocation>
        <location evidence="1">Secreted</location>
        <location evidence="1">Extracellular space</location>
    </subcellularLocation>
    <subcellularLocation>
        <location evidence="1">Secreted</location>
        <location evidence="1">Extracellular space</location>
        <location evidence="1">Extracellular matrix</location>
    </subcellularLocation>
</comment>
<comment type="tissue specificity">
    <text evidence="6 7">Expressed in bone.</text>
</comment>
<comment type="PTM">
    <text evidence="1">Prolines at the third position of the tripeptide repeating unit (G-X-Y) are hydroxylated in some or all of the chains.</text>
</comment>
<comment type="miscellaneous">
    <text evidence="6 7">These protein fragments were extracted from ancient bone material (PubMed:25799987, PubMed:31171860). The displayed protein fragments were extracted from an ancient caudal vertebra bone collected in Ultima Esperanza, Chile and around 13045 years old (PubMed:31171860). The tryptic peptides required multiple purification steps in order to eliminate contaminants and to increase the concentration of peptidic material (PubMed:25799987).</text>
</comment>
<comment type="similarity">
    <text evidence="10">Belongs to the fibrillar collagen family.</text>
</comment>
<dbReference type="GlyCosmos" id="C0HJP3">
    <property type="glycosylation" value="2 sites, No reported glycans"/>
</dbReference>
<dbReference type="GO" id="GO:0005581">
    <property type="term" value="C:collagen trimer"/>
    <property type="evidence" value="ECO:0007669"/>
    <property type="project" value="UniProtKB-KW"/>
</dbReference>
<dbReference type="GO" id="GO:0031012">
    <property type="term" value="C:extracellular matrix"/>
    <property type="evidence" value="ECO:0007669"/>
    <property type="project" value="TreeGrafter"/>
</dbReference>
<dbReference type="GO" id="GO:0005615">
    <property type="term" value="C:extracellular space"/>
    <property type="evidence" value="ECO:0007669"/>
    <property type="project" value="TreeGrafter"/>
</dbReference>
<dbReference type="InterPro" id="IPR008160">
    <property type="entry name" value="Collagen"/>
</dbReference>
<dbReference type="InterPro" id="IPR050149">
    <property type="entry name" value="Collagen_superfamily"/>
</dbReference>
<dbReference type="PANTHER" id="PTHR24023">
    <property type="entry name" value="COLLAGEN ALPHA"/>
    <property type="match status" value="1"/>
</dbReference>
<dbReference type="PANTHER" id="PTHR24023:SF1082">
    <property type="entry name" value="COLLAGEN TRIPLE HELIX REPEAT"/>
    <property type="match status" value="1"/>
</dbReference>
<dbReference type="Pfam" id="PF01391">
    <property type="entry name" value="Collagen"/>
    <property type="match status" value="8"/>
</dbReference>
<keyword id="KW-0106">Calcium</keyword>
<keyword id="KW-0176">Collagen</keyword>
<keyword id="KW-0903">Direct protein sequencing</keyword>
<keyword id="KW-0952">Extinct organism protein</keyword>
<keyword id="KW-0272">Extracellular matrix</keyword>
<keyword id="KW-0325">Glycoprotein</keyword>
<keyword id="KW-0379">Hydroxylation</keyword>
<keyword id="KW-0597">Phosphoprotein</keyword>
<keyword id="KW-0677">Repeat</keyword>
<keyword id="KW-0964">Secreted</keyword>
<sequence>SAGGISVPGPMGPSGPRGLPGPPGAPGPQGFQGPPGEPGEPGASGPMGPRGPPGPPGKNGDDGEAGKPGRPGERGPPGPQGARGLPGTAGLPGMKGHRGFSGLDGAKGDAGPAGPKGEPGSPGENGAPGQMGPRGLPGERGRPGASGPAGARGNDGAAGAAGPPGPTGPAGPPGFPGAVGAKGEAGPQGARGSEGPQGVRGEPGPPGPAGAAGPAGNPGADGQPGAKGANGAPGIAGAPGFPGARGPSGPQGPSGAPGPKGNSGEPGAPGSKGDTGAKGEPGPTGIQGPPGPAGEEGKRGARGEPGPTGLPGPPGERGGPGSRGFPGADGVAGPKGPAGERGSPGPAGPKGSPGEAGRPGEAGLPGAKGLTGSPGSPGPDGKTGPPGPAGQDGRPGPPGPPGARGQAGVMGFPGPKGAAGEPGKAGERGVPGPPGAVGPAGKDGEAGAQGPPGPAGPAGERGEQGPAGSPGFQGLPGPAGPPGEAGKPGEQGVPGDLGAPGPSGARGERGFPGERGVQGPPGPAGPRGSNGAPGNDGAKGDAGAPGAPGSQGAPGLQGMPGERGAAGLPGPKGDRGDAGPKGADGAPGKDGVRGLTGPIGPPGPAGAPGDKGESGPSGPAGPTGARGAPGDRGEPGPPGPAGFAGPPGADGQPGAKGEPGDAGAKGDAGPPGPAGPTGPPGPIGNVGAPGPKGARGSAGPPGATGFPGAAGRVGPPGPSGNAGPPGPPGPVGKEGGKGPRGETGPAGRPGEVSPPGPPGPTGEKGSPGADGPAGAPGTPGPQGISGQRGVVGLPGQRGERGFPGLPGPSGEPGKQGPSGSSGERGPPGPVGPPGLAGPPGESGREGSPGAEGSPGRDGSPGPKGDRGESGPAGPPGAPGAPGAPGPVGPAGKSGDRGETGPAGPAGPAGPAGARGPAGPQGPRGDKGETGEQGDRGIKGHRGFSGLQGPAGPPGSPGEQGPSGASGPAGPRGPPGSAGSPGKDGLNGLPGPIGPPGPRGRTGDAGPVGPPGPPGPPGPPGPP</sequence>
<organism evidence="8">
    <name type="scientific">Mylodon darwinii</name>
    <name type="common">Giant ground sloth</name>
    <dbReference type="NCBI Taxonomy" id="48784"/>
    <lineage>
        <taxon>Eukaryota</taxon>
        <taxon>Metazoa</taxon>
        <taxon>Chordata</taxon>
        <taxon>Craniata</taxon>
        <taxon>Vertebrata</taxon>
        <taxon>Euteleostomi</taxon>
        <taxon>Mammalia</taxon>
        <taxon>Eutheria</taxon>
        <taxon>Xenarthra</taxon>
        <taxon>Pilosa</taxon>
        <taxon>Folivora</taxon>
        <taxon>Mylodontidae</taxon>
        <taxon>Mylodon</taxon>
    </lineage>
</organism>
<name>CO1A1_MYLDA</name>
<evidence type="ECO:0000250" key="1">
    <source>
        <dbReference type="UniProtKB" id="P02452"/>
    </source>
</evidence>
<evidence type="ECO:0000250" key="2">
    <source>
        <dbReference type="UniProtKB" id="P02454"/>
    </source>
</evidence>
<evidence type="ECO:0000250" key="3">
    <source>
        <dbReference type="UniProtKB" id="P02457"/>
    </source>
</evidence>
<evidence type="ECO:0000250" key="4">
    <source>
        <dbReference type="UniProtKB" id="P11087"/>
    </source>
</evidence>
<evidence type="ECO:0000256" key="5">
    <source>
        <dbReference type="SAM" id="MobiDB-lite"/>
    </source>
</evidence>
<evidence type="ECO:0000269" key="6">
    <source>
    </source>
</evidence>
<evidence type="ECO:0000269" key="7">
    <source>
    </source>
</evidence>
<evidence type="ECO:0000303" key="8">
    <source>
    </source>
</evidence>
<evidence type="ECO:0000303" key="9">
    <source>
    </source>
</evidence>
<evidence type="ECO:0000305" key="10"/>
<gene>
    <name evidence="1" type="primary">COL1A1</name>
</gene>
<reference key="1">
    <citation type="journal article" date="2019" name="Nat. Ecol. Evol.">
        <title>Palaeoproteomics resolves sloth relationships.</title>
        <authorList>
            <person name="Presslee S."/>
            <person name="Slater G.J."/>
            <person name="Pujos F."/>
            <person name="Forasiepi A.M."/>
            <person name="Fischer R."/>
            <person name="Molloy K."/>
            <person name="Mackie M."/>
            <person name="Olsen J.V."/>
            <person name="Kramarz A."/>
            <person name="Taglioretti M."/>
            <person name="Scaglia F."/>
            <person name="Lezcano M."/>
            <person name="Lanata J.L."/>
            <person name="Southon J."/>
            <person name="Feranec R."/>
            <person name="Bloch J."/>
            <person name="Hajduk A."/>
            <person name="Martin F.M."/>
            <person name="Salas Gismondi R."/>
            <person name="Reguero M."/>
            <person name="de Muizon C."/>
            <person name="Greenwood A."/>
            <person name="Chait B.T."/>
            <person name="Penkman K."/>
            <person name="Collins M."/>
            <person name="MacPhee R.D.E."/>
        </authorList>
    </citation>
    <scope>PROTEIN SEQUENCE</scope>
    <scope>TISSUE SPECIFICITY</scope>
    <scope>IDENTIFICATION BY MASS SPECTROMETRY</scope>
    <source>
        <tissue evidence="9">Bone</tissue>
    </source>
</reference>
<reference evidence="10" key="2">
    <citation type="journal article" date="2015" name="Nature">
        <title>Ancient proteins resolve the evolutionary history of Darwin's South American ungulates.</title>
        <authorList>
            <person name="Welker F."/>
            <person name="Collins M.J."/>
            <person name="Thomas J.A."/>
            <person name="Wadsley M."/>
            <person name="Brace S."/>
            <person name="Cappellini E."/>
            <person name="Turvey S.T."/>
            <person name="Reguero M."/>
            <person name="Gelfo J.N."/>
            <person name="Kramarz A."/>
            <person name="Burger J."/>
            <person name="Thomas-Oates J."/>
            <person name="Ashford D.A."/>
            <person name="Ashton P.D."/>
            <person name="Rowsell K."/>
            <person name="Porter D.M."/>
            <person name="Kessler B."/>
            <person name="Fischer R."/>
            <person name="Baessmann C."/>
            <person name="Kaspar S."/>
            <person name="Olsen J.V."/>
            <person name="Kiley P."/>
            <person name="Elliott J.A."/>
            <person name="Kelstrup C.D."/>
            <person name="Mullin V."/>
            <person name="Hofreiter M."/>
            <person name="Willerslev E."/>
            <person name="Hublin J.J."/>
            <person name="Orlando L."/>
            <person name="Barnes I."/>
            <person name="MacPhee R.D."/>
        </authorList>
    </citation>
    <scope>PROTEIN SEQUENCE OF 45-52; 74-96; 100-134; 143-272; 279-298; 303-318; 325-336; 343-351; 370-401; 426-507; 517-573; 595-627; 634-653; 663-692; 696-733; 749-856; 867-892; 897-924 AND 943-998</scope>
    <scope>TISSUE SPECIFICITY</scope>
    <scope>IDENTIFICATION BY MASS SPECTROMETRY</scope>
    <source>
        <tissue evidence="8">Bone</tissue>
    </source>
</reference>
<accession>C0HJP3</accession>
<accession>C0HLH7</accession>
<protein>
    <recommendedName>
        <fullName evidence="8">Collagen alpha-1(I) chain</fullName>
    </recommendedName>
    <alternativeName>
        <fullName evidence="1">Alpha-1 type I collagen</fullName>
    </alternativeName>
</protein>
<proteinExistence type="evidence at protein level"/>